<evidence type="ECO:0000250" key="1">
    <source>
        <dbReference type="UniProtKB" id="P19267"/>
    </source>
</evidence>
<evidence type="ECO:0000305" key="2"/>
<proteinExistence type="inferred from homology"/>
<protein>
    <recommendedName>
        <fullName>DNA-binding protein HmvA</fullName>
    </recommendedName>
</protein>
<organism>
    <name type="scientific">Methanococcus voltae</name>
    <dbReference type="NCBI Taxonomy" id="2188"/>
    <lineage>
        <taxon>Archaea</taxon>
        <taxon>Methanobacteriati</taxon>
        <taxon>Methanobacteriota</taxon>
        <taxon>Methanomada group</taxon>
        <taxon>Methanococci</taxon>
        <taxon>Methanococcales</taxon>
        <taxon>Methanococcaceae</taxon>
        <taxon>Methanococcus</taxon>
    </lineage>
</organism>
<sequence length="99" mass="11379">MIPKGTVKRIMKDNTEMYVSTESVVALVDILQEMIVTTTKIAEENAAKDKRKTIKARDIEECDAERLKEKILQVSERTEKVNMLANEILHVIASELERY</sequence>
<gene>
    <name type="primary">hmvA</name>
</gene>
<feature type="chain" id="PRO_0000155006" description="DNA-binding protein HmvA">
    <location>
        <begin position="1"/>
        <end position="99"/>
    </location>
</feature>
<feature type="region of interest" description="Interaction with DNA" evidence="1">
    <location>
        <begin position="52"/>
        <end position="55"/>
    </location>
</feature>
<feature type="site" description="Interaction with DNA" evidence="1">
    <location>
        <position position="12"/>
    </location>
</feature>
<dbReference type="EMBL" id="X69792">
    <property type="protein sequence ID" value="CAA49447.1"/>
    <property type="molecule type" value="Genomic_DNA"/>
</dbReference>
<dbReference type="PIR" id="S78493">
    <property type="entry name" value="S78493"/>
</dbReference>
<dbReference type="SMR" id="Q03576"/>
<dbReference type="OrthoDB" id="7514at2157"/>
<dbReference type="GO" id="GO:0005694">
    <property type="term" value="C:chromosome"/>
    <property type="evidence" value="ECO:0007669"/>
    <property type="project" value="UniProtKB-SubCell"/>
</dbReference>
<dbReference type="GO" id="GO:0005737">
    <property type="term" value="C:cytoplasm"/>
    <property type="evidence" value="ECO:0007669"/>
    <property type="project" value="UniProtKB-SubCell"/>
</dbReference>
<dbReference type="GO" id="GO:0003677">
    <property type="term" value="F:DNA binding"/>
    <property type="evidence" value="ECO:0007669"/>
    <property type="project" value="UniProtKB-KW"/>
</dbReference>
<dbReference type="GO" id="GO:0046982">
    <property type="term" value="F:protein heterodimerization activity"/>
    <property type="evidence" value="ECO:0007669"/>
    <property type="project" value="InterPro"/>
</dbReference>
<dbReference type="CDD" id="cd22909">
    <property type="entry name" value="HFD_archaea_histone-like"/>
    <property type="match status" value="1"/>
</dbReference>
<dbReference type="Gene3D" id="1.10.20.10">
    <property type="entry name" value="Histone, subunit A"/>
    <property type="match status" value="1"/>
</dbReference>
<dbReference type="InterPro" id="IPR003958">
    <property type="entry name" value="CBFA_NFYB_domain"/>
</dbReference>
<dbReference type="InterPro" id="IPR009072">
    <property type="entry name" value="Histone-fold"/>
</dbReference>
<dbReference type="InterPro" id="IPR050004">
    <property type="entry name" value="HmfB-like"/>
</dbReference>
<dbReference type="NCBIfam" id="NF043032">
    <property type="entry name" value="archaea_histone"/>
    <property type="match status" value="1"/>
</dbReference>
<dbReference type="Pfam" id="PF00808">
    <property type="entry name" value="CBFD_NFYB_HMF"/>
    <property type="match status" value="1"/>
</dbReference>
<dbReference type="SUPFAM" id="SSF47113">
    <property type="entry name" value="Histone-fold"/>
    <property type="match status" value="1"/>
</dbReference>
<name>HMVA_METVO</name>
<comment type="function">
    <text evidence="1">Binds and compact DNA (95 to 150 base pairs) to form nucleosome-like structures that contain positive DNA supercoils. Increases the resistance of DNA to thermal denaturation (in vitro).</text>
</comment>
<comment type="subunit">
    <text evidence="1">Homodimer or heterodimer with another histone. Dimers then assemble into higher oligomers, with the DNA wrapped around the protein core (By similarity).</text>
</comment>
<comment type="subcellular location">
    <subcellularLocation>
        <location evidence="2">Cytoplasm</location>
    </subcellularLocation>
    <subcellularLocation>
        <location evidence="2">Chromosome</location>
    </subcellularLocation>
</comment>
<comment type="similarity">
    <text evidence="2">Belongs to the archaeal histone HMF family.</text>
</comment>
<keyword id="KW-0158">Chromosome</keyword>
<keyword id="KW-0963">Cytoplasm</keyword>
<keyword id="KW-0238">DNA-binding</keyword>
<reference key="1">
    <citation type="journal article" date="1993" name="Nucleic Acids Res.">
        <title>Nucleotide sequence of a gene encoding a histone-like protein in the archaeon Methanococcus voltae.</title>
        <authorList>
            <person name="Agha Amiri K."/>
            <person name="Klein A."/>
        </authorList>
    </citation>
    <scope>NUCLEOTIDE SEQUENCE [GENOMIC DNA]</scope>
    <source>
        <strain>ATCC 33273 / DSM 1537 / NBRC 100457 / OCM 70 / PS</strain>
    </source>
</reference>
<accession>Q03576</accession>